<accession>Q12L15</accession>
<evidence type="ECO:0000255" key="1">
    <source>
        <dbReference type="HAMAP-Rule" id="MF_01702"/>
    </source>
</evidence>
<feature type="chain" id="PRO_0000272523" description="Phosphate import ATP-binding protein PstB">
    <location>
        <begin position="1"/>
        <end position="272"/>
    </location>
</feature>
<feature type="domain" description="ABC transporter" evidence="1">
    <location>
        <begin position="26"/>
        <end position="267"/>
    </location>
</feature>
<feature type="binding site" evidence="1">
    <location>
        <begin position="58"/>
        <end position="65"/>
    </location>
    <ligand>
        <name>ATP</name>
        <dbReference type="ChEBI" id="CHEBI:30616"/>
    </ligand>
</feature>
<organism>
    <name type="scientific">Shewanella denitrificans (strain OS217 / ATCC BAA-1090 / DSM 15013)</name>
    <dbReference type="NCBI Taxonomy" id="318161"/>
    <lineage>
        <taxon>Bacteria</taxon>
        <taxon>Pseudomonadati</taxon>
        <taxon>Pseudomonadota</taxon>
        <taxon>Gammaproteobacteria</taxon>
        <taxon>Alteromonadales</taxon>
        <taxon>Shewanellaceae</taxon>
        <taxon>Shewanella</taxon>
    </lineage>
</organism>
<protein>
    <recommendedName>
        <fullName evidence="1">Phosphate import ATP-binding protein PstB</fullName>
        <ecNumber evidence="1">7.3.2.1</ecNumber>
    </recommendedName>
    <alternativeName>
        <fullName evidence="1">ABC phosphate transporter</fullName>
    </alternativeName>
    <alternativeName>
        <fullName evidence="1">Phosphate-transporting ATPase</fullName>
    </alternativeName>
</protein>
<sequence>MISIDQRAMQAKPIDLEHLSAQDTALEIRNLDLSYGDKQALFNVSMKIPKKQVTAFIGPSGCGKSTLLRCINRMNDLVDSCKIKGEILLHGQNIYDKKVDVAALRRNVGMVFQRPNPFPKSIYENVVYGLRLQGLNNRRDLDEAAERSLRGAAIWDEVKDRLHDNAFGLSGGQQQRLVIARAIAIEPEVLLLDEPTSALDPISTLTIEELITELKDKYTVVIVTHNMQQAARVSDQTAFMYMGELVEYADTNTIFTTPRKRKTEDYITGRYG</sequence>
<keyword id="KW-0067">ATP-binding</keyword>
<keyword id="KW-0997">Cell inner membrane</keyword>
<keyword id="KW-1003">Cell membrane</keyword>
<keyword id="KW-0472">Membrane</keyword>
<keyword id="KW-0547">Nucleotide-binding</keyword>
<keyword id="KW-0592">Phosphate transport</keyword>
<keyword id="KW-1185">Reference proteome</keyword>
<keyword id="KW-1278">Translocase</keyword>
<keyword id="KW-0813">Transport</keyword>
<name>PSTB_SHEDO</name>
<comment type="function">
    <text evidence="1">Part of the ABC transporter complex PstSACB involved in phosphate import. Responsible for energy coupling to the transport system.</text>
</comment>
<comment type="catalytic activity">
    <reaction evidence="1">
        <text>phosphate(out) + ATP + H2O = ADP + 2 phosphate(in) + H(+)</text>
        <dbReference type="Rhea" id="RHEA:24440"/>
        <dbReference type="ChEBI" id="CHEBI:15377"/>
        <dbReference type="ChEBI" id="CHEBI:15378"/>
        <dbReference type="ChEBI" id="CHEBI:30616"/>
        <dbReference type="ChEBI" id="CHEBI:43474"/>
        <dbReference type="ChEBI" id="CHEBI:456216"/>
        <dbReference type="EC" id="7.3.2.1"/>
    </reaction>
</comment>
<comment type="subunit">
    <text evidence="1">The complex is composed of two ATP-binding proteins (PstB), two transmembrane proteins (PstC and PstA) and a solute-binding protein (PstS).</text>
</comment>
<comment type="subcellular location">
    <subcellularLocation>
        <location evidence="1">Cell inner membrane</location>
        <topology evidence="1">Peripheral membrane protein</topology>
    </subcellularLocation>
</comment>
<comment type="similarity">
    <text evidence="1">Belongs to the ABC transporter superfamily. Phosphate importer (TC 3.A.1.7) family.</text>
</comment>
<reference key="1">
    <citation type="submission" date="2006-03" db="EMBL/GenBank/DDBJ databases">
        <title>Complete sequence of Shewanella denitrificans OS217.</title>
        <authorList>
            <consortium name="US DOE Joint Genome Institute"/>
            <person name="Copeland A."/>
            <person name="Lucas S."/>
            <person name="Lapidus A."/>
            <person name="Barry K."/>
            <person name="Detter J.C."/>
            <person name="Glavina del Rio T."/>
            <person name="Hammon N."/>
            <person name="Israni S."/>
            <person name="Dalin E."/>
            <person name="Tice H."/>
            <person name="Pitluck S."/>
            <person name="Brettin T."/>
            <person name="Bruce D."/>
            <person name="Han C."/>
            <person name="Tapia R."/>
            <person name="Gilna P."/>
            <person name="Kiss H."/>
            <person name="Schmutz J."/>
            <person name="Larimer F."/>
            <person name="Land M."/>
            <person name="Hauser L."/>
            <person name="Kyrpides N."/>
            <person name="Lykidis A."/>
            <person name="Richardson P."/>
        </authorList>
    </citation>
    <scope>NUCLEOTIDE SEQUENCE [LARGE SCALE GENOMIC DNA]</scope>
    <source>
        <strain>OS217 / ATCC BAA-1090 / DSM 15013</strain>
    </source>
</reference>
<dbReference type="EC" id="7.3.2.1" evidence="1"/>
<dbReference type="EMBL" id="CP000302">
    <property type="protein sequence ID" value="ABE55861.1"/>
    <property type="molecule type" value="Genomic_DNA"/>
</dbReference>
<dbReference type="RefSeq" id="WP_011497012.1">
    <property type="nucleotide sequence ID" value="NC_007954.1"/>
</dbReference>
<dbReference type="SMR" id="Q12L15"/>
<dbReference type="STRING" id="318161.Sden_2582"/>
<dbReference type="KEGG" id="sdn:Sden_2582"/>
<dbReference type="eggNOG" id="COG1117">
    <property type="taxonomic scope" value="Bacteria"/>
</dbReference>
<dbReference type="HOGENOM" id="CLU_000604_1_22_6"/>
<dbReference type="OrthoDB" id="9802264at2"/>
<dbReference type="Proteomes" id="UP000001982">
    <property type="component" value="Chromosome"/>
</dbReference>
<dbReference type="GO" id="GO:0005886">
    <property type="term" value="C:plasma membrane"/>
    <property type="evidence" value="ECO:0007669"/>
    <property type="project" value="UniProtKB-SubCell"/>
</dbReference>
<dbReference type="GO" id="GO:0005524">
    <property type="term" value="F:ATP binding"/>
    <property type="evidence" value="ECO:0007669"/>
    <property type="project" value="UniProtKB-KW"/>
</dbReference>
<dbReference type="GO" id="GO:0016887">
    <property type="term" value="F:ATP hydrolysis activity"/>
    <property type="evidence" value="ECO:0007669"/>
    <property type="project" value="InterPro"/>
</dbReference>
<dbReference type="GO" id="GO:0015415">
    <property type="term" value="F:ATPase-coupled phosphate ion transmembrane transporter activity"/>
    <property type="evidence" value="ECO:0007669"/>
    <property type="project" value="UniProtKB-EC"/>
</dbReference>
<dbReference type="GO" id="GO:0035435">
    <property type="term" value="P:phosphate ion transmembrane transport"/>
    <property type="evidence" value="ECO:0007669"/>
    <property type="project" value="InterPro"/>
</dbReference>
<dbReference type="CDD" id="cd03260">
    <property type="entry name" value="ABC_PstB_phosphate_transporter"/>
    <property type="match status" value="1"/>
</dbReference>
<dbReference type="FunFam" id="3.40.50.300:FF:000132">
    <property type="entry name" value="Phosphate import ATP-binding protein PstB"/>
    <property type="match status" value="1"/>
</dbReference>
<dbReference type="Gene3D" id="3.40.50.300">
    <property type="entry name" value="P-loop containing nucleotide triphosphate hydrolases"/>
    <property type="match status" value="1"/>
</dbReference>
<dbReference type="InterPro" id="IPR003593">
    <property type="entry name" value="AAA+_ATPase"/>
</dbReference>
<dbReference type="InterPro" id="IPR003439">
    <property type="entry name" value="ABC_transporter-like_ATP-bd"/>
</dbReference>
<dbReference type="InterPro" id="IPR017871">
    <property type="entry name" value="ABC_transporter-like_CS"/>
</dbReference>
<dbReference type="InterPro" id="IPR027417">
    <property type="entry name" value="P-loop_NTPase"/>
</dbReference>
<dbReference type="InterPro" id="IPR005670">
    <property type="entry name" value="PstB-like"/>
</dbReference>
<dbReference type="NCBIfam" id="TIGR00972">
    <property type="entry name" value="3a0107s01c2"/>
    <property type="match status" value="1"/>
</dbReference>
<dbReference type="PANTHER" id="PTHR43423">
    <property type="entry name" value="ABC TRANSPORTER I FAMILY MEMBER 17"/>
    <property type="match status" value="1"/>
</dbReference>
<dbReference type="PANTHER" id="PTHR43423:SF12">
    <property type="entry name" value="IRON EXPORT ATP-BINDING PROTEIN FETA-RELATED"/>
    <property type="match status" value="1"/>
</dbReference>
<dbReference type="Pfam" id="PF00005">
    <property type="entry name" value="ABC_tran"/>
    <property type="match status" value="1"/>
</dbReference>
<dbReference type="SMART" id="SM00382">
    <property type="entry name" value="AAA"/>
    <property type="match status" value="1"/>
</dbReference>
<dbReference type="SUPFAM" id="SSF52540">
    <property type="entry name" value="P-loop containing nucleoside triphosphate hydrolases"/>
    <property type="match status" value="1"/>
</dbReference>
<dbReference type="PROSITE" id="PS00211">
    <property type="entry name" value="ABC_TRANSPORTER_1"/>
    <property type="match status" value="1"/>
</dbReference>
<dbReference type="PROSITE" id="PS50893">
    <property type="entry name" value="ABC_TRANSPORTER_2"/>
    <property type="match status" value="1"/>
</dbReference>
<dbReference type="PROSITE" id="PS51238">
    <property type="entry name" value="PSTB"/>
    <property type="match status" value="1"/>
</dbReference>
<proteinExistence type="inferred from homology"/>
<gene>
    <name evidence="1" type="primary">pstB</name>
    <name type="ordered locus">Sden_2582</name>
</gene>